<sequence>MPRSLKKGPFIDLHLLKKVEVAVEKNDRKPVKTWSRRSMILPQMVGLTIAVHNGRQHVPVLVNEDMVGHKLGEFAGTRTYRGHVADKKAKR</sequence>
<gene>
    <name evidence="1" type="primary">rpsS</name>
    <name type="ordered locus">PP_0458</name>
</gene>
<protein>
    <recommendedName>
        <fullName evidence="1">Small ribosomal subunit protein uS19</fullName>
    </recommendedName>
    <alternativeName>
        <fullName evidence="2">30S ribosomal protein S19</fullName>
    </alternativeName>
</protein>
<keyword id="KW-1185">Reference proteome</keyword>
<keyword id="KW-0687">Ribonucleoprotein</keyword>
<keyword id="KW-0689">Ribosomal protein</keyword>
<keyword id="KW-0694">RNA-binding</keyword>
<keyword id="KW-0699">rRNA-binding</keyword>
<evidence type="ECO:0000255" key="1">
    <source>
        <dbReference type="HAMAP-Rule" id="MF_00531"/>
    </source>
</evidence>
<evidence type="ECO:0000305" key="2"/>
<name>RS19_PSEPK</name>
<feature type="chain" id="PRO_0000129884" description="Small ribosomal subunit protein uS19">
    <location>
        <begin position="1"/>
        <end position="91"/>
    </location>
</feature>
<dbReference type="EMBL" id="AE015451">
    <property type="protein sequence ID" value="AAN66088.1"/>
    <property type="molecule type" value="Genomic_DNA"/>
</dbReference>
<dbReference type="RefSeq" id="NP_742624.1">
    <property type="nucleotide sequence ID" value="NC_002947.4"/>
</dbReference>
<dbReference type="RefSeq" id="WP_003255482.1">
    <property type="nucleotide sequence ID" value="NZ_CP169744.1"/>
</dbReference>
<dbReference type="SMR" id="Q88QN1"/>
<dbReference type="STRING" id="160488.PP_0458"/>
<dbReference type="PaxDb" id="160488-PP_0458"/>
<dbReference type="GeneID" id="97165983"/>
<dbReference type="KEGG" id="ppu:PP_0458"/>
<dbReference type="PATRIC" id="fig|160488.4.peg.490"/>
<dbReference type="eggNOG" id="COG0185">
    <property type="taxonomic scope" value="Bacteria"/>
</dbReference>
<dbReference type="HOGENOM" id="CLU_144911_0_1_6"/>
<dbReference type="OrthoDB" id="9797833at2"/>
<dbReference type="PhylomeDB" id="Q88QN1"/>
<dbReference type="BioCyc" id="PPUT160488:G1G01-504-MONOMER"/>
<dbReference type="Proteomes" id="UP000000556">
    <property type="component" value="Chromosome"/>
</dbReference>
<dbReference type="GO" id="GO:0005737">
    <property type="term" value="C:cytoplasm"/>
    <property type="evidence" value="ECO:0007669"/>
    <property type="project" value="UniProtKB-ARBA"/>
</dbReference>
<dbReference type="GO" id="GO:0015935">
    <property type="term" value="C:small ribosomal subunit"/>
    <property type="evidence" value="ECO:0007669"/>
    <property type="project" value="InterPro"/>
</dbReference>
<dbReference type="GO" id="GO:0019843">
    <property type="term" value="F:rRNA binding"/>
    <property type="evidence" value="ECO:0007669"/>
    <property type="project" value="UniProtKB-UniRule"/>
</dbReference>
<dbReference type="GO" id="GO:0003735">
    <property type="term" value="F:structural constituent of ribosome"/>
    <property type="evidence" value="ECO:0007669"/>
    <property type="project" value="InterPro"/>
</dbReference>
<dbReference type="GO" id="GO:0000028">
    <property type="term" value="P:ribosomal small subunit assembly"/>
    <property type="evidence" value="ECO:0007669"/>
    <property type="project" value="TreeGrafter"/>
</dbReference>
<dbReference type="GO" id="GO:0006412">
    <property type="term" value="P:translation"/>
    <property type="evidence" value="ECO:0007669"/>
    <property type="project" value="UniProtKB-UniRule"/>
</dbReference>
<dbReference type="FunFam" id="3.30.860.10:FF:000001">
    <property type="entry name" value="30S ribosomal protein S19"/>
    <property type="match status" value="1"/>
</dbReference>
<dbReference type="Gene3D" id="3.30.860.10">
    <property type="entry name" value="30s Ribosomal Protein S19, Chain A"/>
    <property type="match status" value="1"/>
</dbReference>
<dbReference type="HAMAP" id="MF_00531">
    <property type="entry name" value="Ribosomal_uS19"/>
    <property type="match status" value="1"/>
</dbReference>
<dbReference type="InterPro" id="IPR002222">
    <property type="entry name" value="Ribosomal_uS19"/>
</dbReference>
<dbReference type="InterPro" id="IPR005732">
    <property type="entry name" value="Ribosomal_uS19_bac-type"/>
</dbReference>
<dbReference type="InterPro" id="IPR020934">
    <property type="entry name" value="Ribosomal_uS19_CS"/>
</dbReference>
<dbReference type="InterPro" id="IPR023575">
    <property type="entry name" value="Ribosomal_uS19_SF"/>
</dbReference>
<dbReference type="NCBIfam" id="TIGR01050">
    <property type="entry name" value="rpsS_bact"/>
    <property type="match status" value="1"/>
</dbReference>
<dbReference type="PANTHER" id="PTHR11880">
    <property type="entry name" value="RIBOSOMAL PROTEIN S19P FAMILY MEMBER"/>
    <property type="match status" value="1"/>
</dbReference>
<dbReference type="PANTHER" id="PTHR11880:SF8">
    <property type="entry name" value="SMALL RIBOSOMAL SUBUNIT PROTEIN US19M"/>
    <property type="match status" value="1"/>
</dbReference>
<dbReference type="Pfam" id="PF00203">
    <property type="entry name" value="Ribosomal_S19"/>
    <property type="match status" value="1"/>
</dbReference>
<dbReference type="PIRSF" id="PIRSF002144">
    <property type="entry name" value="Ribosomal_S19"/>
    <property type="match status" value="1"/>
</dbReference>
<dbReference type="PRINTS" id="PR00975">
    <property type="entry name" value="RIBOSOMALS19"/>
</dbReference>
<dbReference type="SUPFAM" id="SSF54570">
    <property type="entry name" value="Ribosomal protein S19"/>
    <property type="match status" value="1"/>
</dbReference>
<dbReference type="PROSITE" id="PS00323">
    <property type="entry name" value="RIBOSOMAL_S19"/>
    <property type="match status" value="1"/>
</dbReference>
<reference key="1">
    <citation type="journal article" date="2002" name="Environ. Microbiol.">
        <title>Complete genome sequence and comparative analysis of the metabolically versatile Pseudomonas putida KT2440.</title>
        <authorList>
            <person name="Nelson K.E."/>
            <person name="Weinel C."/>
            <person name="Paulsen I.T."/>
            <person name="Dodson R.J."/>
            <person name="Hilbert H."/>
            <person name="Martins dos Santos V.A.P."/>
            <person name="Fouts D.E."/>
            <person name="Gill S.R."/>
            <person name="Pop M."/>
            <person name="Holmes M."/>
            <person name="Brinkac L.M."/>
            <person name="Beanan M.J."/>
            <person name="DeBoy R.T."/>
            <person name="Daugherty S.C."/>
            <person name="Kolonay J.F."/>
            <person name="Madupu R."/>
            <person name="Nelson W.C."/>
            <person name="White O."/>
            <person name="Peterson J.D."/>
            <person name="Khouri H.M."/>
            <person name="Hance I."/>
            <person name="Chris Lee P."/>
            <person name="Holtzapple E.K."/>
            <person name="Scanlan D."/>
            <person name="Tran K."/>
            <person name="Moazzez A."/>
            <person name="Utterback T.R."/>
            <person name="Rizzo M."/>
            <person name="Lee K."/>
            <person name="Kosack D."/>
            <person name="Moestl D."/>
            <person name="Wedler H."/>
            <person name="Lauber J."/>
            <person name="Stjepandic D."/>
            <person name="Hoheisel J."/>
            <person name="Straetz M."/>
            <person name="Heim S."/>
            <person name="Kiewitz C."/>
            <person name="Eisen J.A."/>
            <person name="Timmis K.N."/>
            <person name="Duesterhoeft A."/>
            <person name="Tuemmler B."/>
            <person name="Fraser C.M."/>
        </authorList>
    </citation>
    <scope>NUCLEOTIDE SEQUENCE [LARGE SCALE GENOMIC DNA]</scope>
    <source>
        <strain>ATCC 47054 / DSM 6125 / CFBP 8728 / NCIMB 11950 / KT2440</strain>
    </source>
</reference>
<organism>
    <name type="scientific">Pseudomonas putida (strain ATCC 47054 / DSM 6125 / CFBP 8728 / NCIMB 11950 / KT2440)</name>
    <dbReference type="NCBI Taxonomy" id="160488"/>
    <lineage>
        <taxon>Bacteria</taxon>
        <taxon>Pseudomonadati</taxon>
        <taxon>Pseudomonadota</taxon>
        <taxon>Gammaproteobacteria</taxon>
        <taxon>Pseudomonadales</taxon>
        <taxon>Pseudomonadaceae</taxon>
        <taxon>Pseudomonas</taxon>
    </lineage>
</organism>
<accession>Q88QN1</accession>
<proteinExistence type="inferred from homology"/>
<comment type="function">
    <text evidence="1">Protein S19 forms a complex with S13 that binds strongly to the 16S ribosomal RNA.</text>
</comment>
<comment type="similarity">
    <text evidence="1">Belongs to the universal ribosomal protein uS19 family.</text>
</comment>